<accession>Q0T333</accession>
<organism>
    <name type="scientific">Shigella flexneri serotype 5b (strain 8401)</name>
    <dbReference type="NCBI Taxonomy" id="373384"/>
    <lineage>
        <taxon>Bacteria</taxon>
        <taxon>Pseudomonadati</taxon>
        <taxon>Pseudomonadota</taxon>
        <taxon>Gammaproteobacteria</taxon>
        <taxon>Enterobacterales</taxon>
        <taxon>Enterobacteriaceae</taxon>
        <taxon>Shigella</taxon>
    </lineage>
</organism>
<feature type="chain" id="PRO_0000333790" description="Nickel/cobalt efflux system RcnA">
    <location>
        <begin position="1"/>
        <end position="282"/>
    </location>
</feature>
<feature type="topological domain" description="Periplasmic" evidence="2">
    <location>
        <begin position="1"/>
        <end position="12"/>
    </location>
</feature>
<feature type="transmembrane region" description="Helical" evidence="2">
    <location>
        <begin position="13"/>
        <end position="33"/>
    </location>
</feature>
<feature type="topological domain" description="Cytoplasmic" evidence="2">
    <location>
        <begin position="34"/>
        <end position="56"/>
    </location>
</feature>
<feature type="transmembrane region" description="Helical" evidence="2">
    <location>
        <begin position="57"/>
        <end position="77"/>
    </location>
</feature>
<feature type="topological domain" description="Periplasmic" evidence="2">
    <location>
        <begin position="78"/>
        <end position="86"/>
    </location>
</feature>
<feature type="transmembrane region" description="Helical" evidence="2">
    <location>
        <begin position="87"/>
        <end position="107"/>
    </location>
</feature>
<feature type="topological domain" description="Cytoplasmic" evidence="2">
    <location>
        <begin position="108"/>
        <end position="182"/>
    </location>
</feature>
<feature type="transmembrane region" description="Helical" evidence="2">
    <location>
        <begin position="183"/>
        <end position="203"/>
    </location>
</feature>
<feature type="topological domain" description="Periplasmic" evidence="2">
    <location>
        <begin position="204"/>
        <end position="217"/>
    </location>
</feature>
<feature type="transmembrane region" description="Helical" evidence="2">
    <location>
        <begin position="218"/>
        <end position="238"/>
    </location>
</feature>
<feature type="topological domain" description="Cytoplasmic" evidence="2">
    <location>
        <begin position="239"/>
        <end position="259"/>
    </location>
</feature>
<feature type="transmembrane region" description="Helical" evidence="2">
    <location>
        <begin position="260"/>
        <end position="280"/>
    </location>
</feature>
<feature type="topological domain" description="Periplasmic" evidence="2">
    <location>
        <begin position="281"/>
        <end position="282"/>
    </location>
</feature>
<feature type="region of interest" description="Disordered" evidence="3">
    <location>
        <begin position="127"/>
        <end position="161"/>
    </location>
</feature>
<feature type="compositionally biased region" description="Basic and acidic residues" evidence="3">
    <location>
        <begin position="135"/>
        <end position="144"/>
    </location>
</feature>
<gene>
    <name type="primary">rcnA</name>
    <name type="ordered locus">SFV_2161</name>
</gene>
<sequence length="282" mass="31484">MTEFTTLLQQGNAWFFIPSAILLGALHGLEPGHSKTMMAAFIIAIKGTIKQAVMLGLAATISHTAVVWLIAFGGMVISKRFTAQSAEPWLQLISAVIIIGTAFWMFWRTWRGERNWLENMHGHDYEHHHHHHDHEHHQDHEHHHDQGHHHHHEHGEYQDAHARAHANDIKRRFDGREVINWQILLFGLTGGFIPCPAAITVLLICIQLKALTLGATLVVSFSIGLALTLVTVGVGAAISVQQVAKRWSGFNTLAKRAPYFSSLLIGLVGVYMGVHGFMGIMR</sequence>
<reference key="1">
    <citation type="journal article" date="2006" name="BMC Genomics">
        <title>Complete genome sequence of Shigella flexneri 5b and comparison with Shigella flexneri 2a.</title>
        <authorList>
            <person name="Nie H."/>
            <person name="Yang F."/>
            <person name="Zhang X."/>
            <person name="Yang J."/>
            <person name="Chen L."/>
            <person name="Wang J."/>
            <person name="Xiong Z."/>
            <person name="Peng J."/>
            <person name="Sun L."/>
            <person name="Dong J."/>
            <person name="Xue Y."/>
            <person name="Xu X."/>
            <person name="Chen S."/>
            <person name="Yao Z."/>
            <person name="Shen Y."/>
            <person name="Jin Q."/>
        </authorList>
    </citation>
    <scope>NUCLEOTIDE SEQUENCE [LARGE SCALE GENOMIC DNA]</scope>
    <source>
        <strain>8401</strain>
    </source>
</reference>
<keyword id="KW-0997">Cell inner membrane</keyword>
<keyword id="KW-1003">Cell membrane</keyword>
<keyword id="KW-0170">Cobalt</keyword>
<keyword id="KW-0171">Cobalt transport</keyword>
<keyword id="KW-0406">Ion transport</keyword>
<keyword id="KW-0472">Membrane</keyword>
<keyword id="KW-0533">Nickel</keyword>
<keyword id="KW-0921">Nickel transport</keyword>
<keyword id="KW-0812">Transmembrane</keyword>
<keyword id="KW-1133">Transmembrane helix</keyword>
<keyword id="KW-0813">Transport</keyword>
<protein>
    <recommendedName>
        <fullName>Nickel/cobalt efflux system RcnA</fullName>
    </recommendedName>
</protein>
<name>RCNA_SHIF8</name>
<proteinExistence type="inferred from homology"/>
<comment type="function">
    <text evidence="1">Efflux system for nickel and cobalt.</text>
</comment>
<comment type="subcellular location">
    <subcellularLocation>
        <location evidence="1">Cell inner membrane</location>
        <topology evidence="1">Multi-pass membrane protein</topology>
    </subcellularLocation>
</comment>
<comment type="induction">
    <text evidence="1">By nickel and cobalt. Transcriptionally repressed by RcnR (By similarity).</text>
</comment>
<comment type="similarity">
    <text evidence="4">Belongs to the NiCoT transporter (TC 2.A.52) family. RcnA subfamily.</text>
</comment>
<evidence type="ECO:0000250" key="1"/>
<evidence type="ECO:0000255" key="2"/>
<evidence type="ECO:0000256" key="3">
    <source>
        <dbReference type="SAM" id="MobiDB-lite"/>
    </source>
</evidence>
<evidence type="ECO:0000305" key="4"/>
<dbReference type="EMBL" id="CP000266">
    <property type="protein sequence ID" value="ABF04282.1"/>
    <property type="molecule type" value="Genomic_DNA"/>
</dbReference>
<dbReference type="RefSeq" id="WP_000134598.1">
    <property type="nucleotide sequence ID" value="NC_008258.1"/>
</dbReference>
<dbReference type="KEGG" id="sfv:SFV_2161"/>
<dbReference type="HOGENOM" id="CLU_058605_2_0_6"/>
<dbReference type="Proteomes" id="UP000000659">
    <property type="component" value="Chromosome"/>
</dbReference>
<dbReference type="GO" id="GO:0005886">
    <property type="term" value="C:plasma membrane"/>
    <property type="evidence" value="ECO:0007669"/>
    <property type="project" value="UniProtKB-SubCell"/>
</dbReference>
<dbReference type="GO" id="GO:0046583">
    <property type="term" value="F:monoatomic cation efflux transmembrane transporter activity"/>
    <property type="evidence" value="ECO:0007669"/>
    <property type="project" value="TreeGrafter"/>
</dbReference>
<dbReference type="GO" id="GO:0015099">
    <property type="term" value="F:nickel cation transmembrane transporter activity"/>
    <property type="evidence" value="ECO:0007669"/>
    <property type="project" value="InterPro"/>
</dbReference>
<dbReference type="GO" id="GO:0006824">
    <property type="term" value="P:cobalt ion transport"/>
    <property type="evidence" value="ECO:0007669"/>
    <property type="project" value="UniProtKB-KW"/>
</dbReference>
<dbReference type="GO" id="GO:0032025">
    <property type="term" value="P:response to cobalt ion"/>
    <property type="evidence" value="ECO:0007669"/>
    <property type="project" value="TreeGrafter"/>
</dbReference>
<dbReference type="GO" id="GO:0010045">
    <property type="term" value="P:response to nickel cation"/>
    <property type="evidence" value="ECO:0007669"/>
    <property type="project" value="TreeGrafter"/>
</dbReference>
<dbReference type="Gene3D" id="3.40.50.1980">
    <property type="entry name" value="Nitrogenase molybdenum iron protein domain"/>
    <property type="match status" value="1"/>
</dbReference>
<dbReference type="InterPro" id="IPR011541">
    <property type="entry name" value="Ni/Co_transpt_high_affinity"/>
</dbReference>
<dbReference type="InterPro" id="IPR051224">
    <property type="entry name" value="NiCoT_RcnA"/>
</dbReference>
<dbReference type="NCBIfam" id="NF007454">
    <property type="entry name" value="PRK10019.1"/>
    <property type="match status" value="1"/>
</dbReference>
<dbReference type="PANTHER" id="PTHR40659">
    <property type="entry name" value="NICKEL/COBALT EFFLUX SYSTEM RCNA"/>
    <property type="match status" value="1"/>
</dbReference>
<dbReference type="PANTHER" id="PTHR40659:SF1">
    <property type="entry name" value="NICKEL_COBALT EFFLUX SYSTEM RCNA"/>
    <property type="match status" value="1"/>
</dbReference>
<dbReference type="Pfam" id="PF03824">
    <property type="entry name" value="NicO"/>
    <property type="match status" value="1"/>
</dbReference>